<organism>
    <name type="scientific">Kluyveromyces lactis (strain ATCC 8585 / CBS 2359 / DSM 70799 / NBRC 1267 / NRRL Y-1140 / WM37)</name>
    <name type="common">Yeast</name>
    <name type="synonym">Candida sphaerica</name>
    <dbReference type="NCBI Taxonomy" id="284590"/>
    <lineage>
        <taxon>Eukaryota</taxon>
        <taxon>Fungi</taxon>
        <taxon>Dikarya</taxon>
        <taxon>Ascomycota</taxon>
        <taxon>Saccharomycotina</taxon>
        <taxon>Saccharomycetes</taxon>
        <taxon>Saccharomycetales</taxon>
        <taxon>Saccharomycetaceae</taxon>
        <taxon>Kluyveromyces</taxon>
    </lineage>
</organism>
<gene>
    <name type="primary">AMN1</name>
    <name type="ordered locus">KLLA0B09856g</name>
</gene>
<dbReference type="EMBL" id="CR382122">
    <property type="protein sequence ID" value="CAH02360.1"/>
    <property type="molecule type" value="Genomic_DNA"/>
</dbReference>
<dbReference type="RefSeq" id="XP_451967.1">
    <property type="nucleotide sequence ID" value="XM_451967.1"/>
</dbReference>
<dbReference type="SMR" id="Q6CVS2"/>
<dbReference type="FunCoup" id="Q6CVS2">
    <property type="interactions" value="129"/>
</dbReference>
<dbReference type="STRING" id="284590.Q6CVS2"/>
<dbReference type="PaxDb" id="284590-Q6CVS2"/>
<dbReference type="KEGG" id="kla:KLLA0_B09856g"/>
<dbReference type="eggNOG" id="KOG1947">
    <property type="taxonomic scope" value="Eukaryota"/>
</dbReference>
<dbReference type="HOGENOM" id="CLU_647345_0_0_1"/>
<dbReference type="InParanoid" id="Q6CVS2"/>
<dbReference type="OMA" id="IGLAGCH"/>
<dbReference type="Proteomes" id="UP000000598">
    <property type="component" value="Chromosome B"/>
</dbReference>
<dbReference type="GO" id="GO:0005737">
    <property type="term" value="C:cytoplasm"/>
    <property type="evidence" value="ECO:0007669"/>
    <property type="project" value="UniProtKB-SubCell"/>
</dbReference>
<dbReference type="GO" id="GO:0005634">
    <property type="term" value="C:nucleus"/>
    <property type="evidence" value="ECO:0007669"/>
    <property type="project" value="UniProtKB-SubCell"/>
</dbReference>
<dbReference type="GO" id="GO:0019005">
    <property type="term" value="C:SCF ubiquitin ligase complex"/>
    <property type="evidence" value="ECO:0007669"/>
    <property type="project" value="TreeGrafter"/>
</dbReference>
<dbReference type="GO" id="GO:0051301">
    <property type="term" value="P:cell division"/>
    <property type="evidence" value="ECO:0007669"/>
    <property type="project" value="UniProtKB-KW"/>
</dbReference>
<dbReference type="GO" id="GO:0031146">
    <property type="term" value="P:SCF-dependent proteasomal ubiquitin-dependent protein catabolic process"/>
    <property type="evidence" value="ECO:0007669"/>
    <property type="project" value="TreeGrafter"/>
</dbReference>
<dbReference type="CDD" id="cd09293">
    <property type="entry name" value="AMN1"/>
    <property type="match status" value="1"/>
</dbReference>
<dbReference type="CDD" id="cd22131">
    <property type="entry name" value="F-box_FBXW2"/>
    <property type="match status" value="1"/>
</dbReference>
<dbReference type="Gene3D" id="1.20.1280.50">
    <property type="match status" value="1"/>
</dbReference>
<dbReference type="Gene3D" id="3.80.10.10">
    <property type="entry name" value="Ribonuclease Inhibitor"/>
    <property type="match status" value="2"/>
</dbReference>
<dbReference type="InterPro" id="IPR036047">
    <property type="entry name" value="F-box-like_dom_sf"/>
</dbReference>
<dbReference type="InterPro" id="IPR001810">
    <property type="entry name" value="F-box_dom"/>
</dbReference>
<dbReference type="InterPro" id="IPR006553">
    <property type="entry name" value="Leu-rich_rpt_Cys-con_subtyp"/>
</dbReference>
<dbReference type="InterPro" id="IPR032675">
    <property type="entry name" value="LRR_dom_sf"/>
</dbReference>
<dbReference type="PANTHER" id="PTHR13318:SF95">
    <property type="entry name" value="F-BOX PROTEIN YLR352W"/>
    <property type="match status" value="1"/>
</dbReference>
<dbReference type="PANTHER" id="PTHR13318">
    <property type="entry name" value="PARTNER OF PAIRED, ISOFORM B-RELATED"/>
    <property type="match status" value="1"/>
</dbReference>
<dbReference type="Pfam" id="PF00646">
    <property type="entry name" value="F-box"/>
    <property type="match status" value="1"/>
</dbReference>
<dbReference type="SMART" id="SM00367">
    <property type="entry name" value="LRR_CC"/>
    <property type="match status" value="4"/>
</dbReference>
<dbReference type="SUPFAM" id="SSF81383">
    <property type="entry name" value="F-box domain"/>
    <property type="match status" value="1"/>
</dbReference>
<dbReference type="SUPFAM" id="SSF52047">
    <property type="entry name" value="RNI-like"/>
    <property type="match status" value="1"/>
</dbReference>
<accession>Q6CVS2</accession>
<name>AMN1_KLULA</name>
<reference key="1">
    <citation type="journal article" date="2004" name="Nature">
        <title>Genome evolution in yeasts.</title>
        <authorList>
            <person name="Dujon B."/>
            <person name="Sherman D."/>
            <person name="Fischer G."/>
            <person name="Durrens P."/>
            <person name="Casaregola S."/>
            <person name="Lafontaine I."/>
            <person name="de Montigny J."/>
            <person name="Marck C."/>
            <person name="Neuveglise C."/>
            <person name="Talla E."/>
            <person name="Goffard N."/>
            <person name="Frangeul L."/>
            <person name="Aigle M."/>
            <person name="Anthouard V."/>
            <person name="Babour A."/>
            <person name="Barbe V."/>
            <person name="Barnay S."/>
            <person name="Blanchin S."/>
            <person name="Beckerich J.-M."/>
            <person name="Beyne E."/>
            <person name="Bleykasten C."/>
            <person name="Boisrame A."/>
            <person name="Boyer J."/>
            <person name="Cattolico L."/>
            <person name="Confanioleri F."/>
            <person name="de Daruvar A."/>
            <person name="Despons L."/>
            <person name="Fabre E."/>
            <person name="Fairhead C."/>
            <person name="Ferry-Dumazet H."/>
            <person name="Groppi A."/>
            <person name="Hantraye F."/>
            <person name="Hennequin C."/>
            <person name="Jauniaux N."/>
            <person name="Joyet P."/>
            <person name="Kachouri R."/>
            <person name="Kerrest A."/>
            <person name="Koszul R."/>
            <person name="Lemaire M."/>
            <person name="Lesur I."/>
            <person name="Ma L."/>
            <person name="Muller H."/>
            <person name="Nicaud J.-M."/>
            <person name="Nikolski M."/>
            <person name="Oztas S."/>
            <person name="Ozier-Kalogeropoulos O."/>
            <person name="Pellenz S."/>
            <person name="Potier S."/>
            <person name="Richard G.-F."/>
            <person name="Straub M.-L."/>
            <person name="Suleau A."/>
            <person name="Swennen D."/>
            <person name="Tekaia F."/>
            <person name="Wesolowski-Louvel M."/>
            <person name="Westhof E."/>
            <person name="Wirth B."/>
            <person name="Zeniou-Meyer M."/>
            <person name="Zivanovic Y."/>
            <person name="Bolotin-Fukuhara M."/>
            <person name="Thierry A."/>
            <person name="Bouchier C."/>
            <person name="Caudron B."/>
            <person name="Scarpelli C."/>
            <person name="Gaillardin C."/>
            <person name="Weissenbach J."/>
            <person name="Wincker P."/>
            <person name="Souciet J.-L."/>
        </authorList>
    </citation>
    <scope>NUCLEOTIDE SEQUENCE [LARGE SCALE GENOMIC DNA]</scope>
    <source>
        <strain>ATCC 8585 / CBS 2359 / DSM 70799 / NBRC 1267 / NRRL Y-1140 / WM37</strain>
    </source>
</reference>
<feature type="chain" id="PRO_0000277845" description="Antagonist of mitotic exit network protein 1">
    <location>
        <begin position="1"/>
        <end position="424"/>
    </location>
</feature>
<evidence type="ECO:0000250" key="1"/>
<evidence type="ECO:0000250" key="2">
    <source>
        <dbReference type="UniProtKB" id="P38285"/>
    </source>
</evidence>
<evidence type="ECO:0000305" key="3"/>
<sequence>MSCVSSISSKRSRCEGFDDDFIHTPLKKCSKGYHEWSLSITTPATTPTGKLDYKRKTKSLDDDLISSPVKFGTDANVLNAEFQELSLQKLLVSLSTSDDSKSNPIFHIPELLHRIFNFLDHESLYRCSKVNPVWAAVASSIINKDLVIQQSSISGDLKIVELDQKVHPKSLTFYKLKQHRNFIENQLPRIRFTRLNSLNFYISPVLPAIFDDVTISNNLTKLTIAGNKKINDEELISLILGLPNLIDLDLRACSQISDISIVSIVTHCPKLQSINLGRHENSHLITDLSIMALSELEHLTTVGFSGCDKISDVSIWQLYSKHSTTLVRLSINGCTQISDSSISDIVAKHGFPNLKVLDIRNCQLVRFKNLIQYRDWRHKYLMKPIHIHISDSMKKEFELQEQQLYKEFRTRIVNDLNRWVNEAT</sequence>
<proteinExistence type="inferred from homology"/>
<keyword id="KW-0131">Cell cycle</keyword>
<keyword id="KW-0132">Cell division</keyword>
<keyword id="KW-0963">Cytoplasm</keyword>
<keyword id="KW-0498">Mitosis</keyword>
<keyword id="KW-0539">Nucleus</keyword>
<keyword id="KW-1185">Reference proteome</keyword>
<comment type="function">
    <text evidence="1">Negative regulator of the mitotic exit network (MEN), required for multiple cell cycle checkpoints. Required for daughter cell separation and chromosome stability. Involved in copper sensitivity.</text>
</comment>
<comment type="subcellular location">
    <subcellularLocation>
        <location evidence="2">Cytoplasm</location>
    </subcellularLocation>
    <subcellularLocation>
        <location evidence="2">Nucleus</location>
    </subcellularLocation>
</comment>
<comment type="similarity">
    <text evidence="3">Belongs to the AMN1 family.</text>
</comment>
<protein>
    <recommendedName>
        <fullName>Antagonist of mitotic exit network protein 1</fullName>
    </recommendedName>
</protein>